<protein>
    <recommendedName>
        <fullName>Cerberus</fullName>
    </recommendedName>
    <alternativeName>
        <fullName>Cerberus-like protein</fullName>
        <shortName>Cer-l</shortName>
    </alternativeName>
    <alternativeName>
        <fullName>Cerberus-related protein</fullName>
    </alternativeName>
</protein>
<sequence length="272" mass="30431">MHLLLVQLLVLLPLGKADLCVDGCQSQGSLSFPLLERGRRDLHVANHEEAEDKPDLFVAVPHLMGTSLAGEGQRQRGKMLSRLGRFWKKPETEFYPPRDVESDHVSSGMQAVTQPADGRKVERSPLQEEAKRFWHRFMFRKGPAFQGVILPIKSHEVHWETCRTVPFNQTIAHEDCQKVVVQNNLCFGKCSSIRFPGEGADAHSFCSHCSPTKFTTVHLMLNCTSPTPVVKMVMQVEECQCMVKTERGEERLLLAGSQGSFIPGLPASKTNP</sequence>
<dbReference type="EMBL" id="AF012244">
    <property type="protein sequence ID" value="AAB71838.1"/>
    <property type="molecule type" value="Genomic_DNA"/>
</dbReference>
<dbReference type="EMBL" id="AF035579">
    <property type="protein sequence ID" value="AAC02430.1"/>
    <property type="molecule type" value="mRNA"/>
</dbReference>
<dbReference type="EMBL" id="AF031896">
    <property type="protein sequence ID" value="AAC24461.1"/>
    <property type="molecule type" value="mRNA"/>
</dbReference>
<dbReference type="CCDS" id="CCDS18295.1"/>
<dbReference type="RefSeq" id="NP_034017.1">
    <property type="nucleotide sequence ID" value="NM_009887.2"/>
</dbReference>
<dbReference type="SMR" id="O55233"/>
<dbReference type="BioGRID" id="198677">
    <property type="interactions" value="1"/>
</dbReference>
<dbReference type="FunCoup" id="O55233">
    <property type="interactions" value="621"/>
</dbReference>
<dbReference type="STRING" id="10090.ENSMUSP00000048607"/>
<dbReference type="GlyCosmos" id="O55233">
    <property type="glycosylation" value="2 sites, No reported glycans"/>
</dbReference>
<dbReference type="GlyGen" id="O55233">
    <property type="glycosylation" value="3 sites"/>
</dbReference>
<dbReference type="iPTMnet" id="O55233"/>
<dbReference type="PhosphoSitePlus" id="O55233"/>
<dbReference type="PaxDb" id="10090-ENSMUSP00000048607"/>
<dbReference type="Antibodypedia" id="10019">
    <property type="antibodies" value="265 antibodies from 31 providers"/>
</dbReference>
<dbReference type="DNASU" id="12622"/>
<dbReference type="Ensembl" id="ENSMUST00000048430.4">
    <property type="protein sequence ID" value="ENSMUSP00000048607.4"/>
    <property type="gene ID" value="ENSMUSG00000038192.6"/>
</dbReference>
<dbReference type="GeneID" id="12622"/>
<dbReference type="KEGG" id="mmu:12622"/>
<dbReference type="UCSC" id="uc008tkl.2">
    <property type="organism name" value="mouse"/>
</dbReference>
<dbReference type="AGR" id="MGI:1201414"/>
<dbReference type="CTD" id="9350"/>
<dbReference type="MGI" id="MGI:1201414">
    <property type="gene designation" value="Cer1"/>
</dbReference>
<dbReference type="VEuPathDB" id="HostDB:ENSMUSG00000038192"/>
<dbReference type="eggNOG" id="ENOG502S2G4">
    <property type="taxonomic scope" value="Eukaryota"/>
</dbReference>
<dbReference type="GeneTree" id="ENSGT00530000063926"/>
<dbReference type="HOGENOM" id="CLU_104447_0_0_1"/>
<dbReference type="InParanoid" id="O55233"/>
<dbReference type="OMA" id="KKFWDHF"/>
<dbReference type="OrthoDB" id="9950584at2759"/>
<dbReference type="PhylomeDB" id="O55233"/>
<dbReference type="TreeFam" id="TF106445"/>
<dbReference type="Reactome" id="R-MMU-201451">
    <property type="pathway name" value="Signaling by BMP"/>
</dbReference>
<dbReference type="BioGRID-ORCS" id="12622">
    <property type="hits" value="2 hits in 77 CRISPR screens"/>
</dbReference>
<dbReference type="ChiTaRS" id="Acer1">
    <property type="organism name" value="mouse"/>
</dbReference>
<dbReference type="PRO" id="PR:O55233"/>
<dbReference type="Proteomes" id="UP000000589">
    <property type="component" value="Chromosome 4"/>
</dbReference>
<dbReference type="RNAct" id="O55233">
    <property type="molecule type" value="protein"/>
</dbReference>
<dbReference type="Bgee" id="ENSMUSG00000038192">
    <property type="expression patterns" value="Expressed in endoderm and 35 other cell types or tissues"/>
</dbReference>
<dbReference type="ExpressionAtlas" id="O55233">
    <property type="expression patterns" value="baseline and differential"/>
</dbReference>
<dbReference type="GO" id="GO:0005576">
    <property type="term" value="C:extracellular region"/>
    <property type="evidence" value="ECO:0000314"/>
    <property type="project" value="MGI"/>
</dbReference>
<dbReference type="GO" id="GO:0005615">
    <property type="term" value="C:extracellular space"/>
    <property type="evidence" value="ECO:0000314"/>
    <property type="project" value="BHF-UCL"/>
</dbReference>
<dbReference type="GO" id="GO:0036122">
    <property type="term" value="F:BMP binding"/>
    <property type="evidence" value="ECO:0007669"/>
    <property type="project" value="Ensembl"/>
</dbReference>
<dbReference type="GO" id="GO:0005125">
    <property type="term" value="F:cytokine activity"/>
    <property type="evidence" value="ECO:0007669"/>
    <property type="project" value="UniProtKB-KW"/>
</dbReference>
<dbReference type="GO" id="GO:0016015">
    <property type="term" value="F:morphogen activity"/>
    <property type="evidence" value="ECO:0007669"/>
    <property type="project" value="Ensembl"/>
</dbReference>
<dbReference type="GO" id="GO:0042803">
    <property type="term" value="F:protein homodimerization activity"/>
    <property type="evidence" value="ECO:0000314"/>
    <property type="project" value="BHF-UCL"/>
</dbReference>
<dbReference type="GO" id="GO:0009948">
    <property type="term" value="P:anterior/posterior axis specification"/>
    <property type="evidence" value="ECO:0000314"/>
    <property type="project" value="MGI"/>
</dbReference>
<dbReference type="GO" id="GO:0009952">
    <property type="term" value="P:anterior/posterior pattern specification"/>
    <property type="evidence" value="ECO:0000314"/>
    <property type="project" value="MGI"/>
</dbReference>
<dbReference type="GO" id="GO:0030282">
    <property type="term" value="P:bone mineralization"/>
    <property type="evidence" value="ECO:0007669"/>
    <property type="project" value="Ensembl"/>
</dbReference>
<dbReference type="GO" id="GO:0042074">
    <property type="term" value="P:cell migration involved in gastrulation"/>
    <property type="evidence" value="ECO:0000316"/>
    <property type="project" value="MGI"/>
</dbReference>
<dbReference type="GO" id="GO:0008283">
    <property type="term" value="P:cell population proliferation"/>
    <property type="evidence" value="ECO:0000316"/>
    <property type="project" value="MGI"/>
</dbReference>
<dbReference type="GO" id="GO:0071276">
    <property type="term" value="P:cellular response to cadmium ion"/>
    <property type="evidence" value="ECO:0000314"/>
    <property type="project" value="MGI"/>
</dbReference>
<dbReference type="GO" id="GO:0048263">
    <property type="term" value="P:determination of dorsal identity"/>
    <property type="evidence" value="ECO:0007669"/>
    <property type="project" value="Ensembl"/>
</dbReference>
<dbReference type="GO" id="GO:0007369">
    <property type="term" value="P:gastrulation"/>
    <property type="evidence" value="ECO:0000316"/>
    <property type="project" value="MGI"/>
</dbReference>
<dbReference type="GO" id="GO:0003419">
    <property type="term" value="P:growth plate cartilage chondrocyte proliferation"/>
    <property type="evidence" value="ECO:0000270"/>
    <property type="project" value="BHF-UCL"/>
</dbReference>
<dbReference type="GO" id="GO:0032926">
    <property type="term" value="P:negative regulation of activin receptor signaling pathway"/>
    <property type="evidence" value="ECO:0000314"/>
    <property type="project" value="BHF-UCL"/>
</dbReference>
<dbReference type="GO" id="GO:0030514">
    <property type="term" value="P:negative regulation of BMP signaling pathway"/>
    <property type="evidence" value="ECO:0000314"/>
    <property type="project" value="MGI"/>
</dbReference>
<dbReference type="GO" id="GO:0008285">
    <property type="term" value="P:negative regulation of cell population proliferation"/>
    <property type="evidence" value="ECO:0000316"/>
    <property type="project" value="MGI"/>
</dbReference>
<dbReference type="GO" id="GO:2000381">
    <property type="term" value="P:negative regulation of mesoderm development"/>
    <property type="evidence" value="ECO:0000314"/>
    <property type="project" value="BHF-UCL"/>
</dbReference>
<dbReference type="GO" id="GO:0007399">
    <property type="term" value="P:nervous system development"/>
    <property type="evidence" value="ECO:0007669"/>
    <property type="project" value="Ensembl"/>
</dbReference>
<dbReference type="GO" id="GO:0035582">
    <property type="term" value="P:sequestering of BMP in extracellular matrix"/>
    <property type="evidence" value="ECO:0000314"/>
    <property type="project" value="BHF-UCL"/>
</dbReference>
<dbReference type="GO" id="GO:0023019">
    <property type="term" value="P:signal transduction involved in regulation of gene expression"/>
    <property type="evidence" value="ECO:0000314"/>
    <property type="project" value="MGI"/>
</dbReference>
<dbReference type="GO" id="GO:0001657">
    <property type="term" value="P:ureteric bud development"/>
    <property type="evidence" value="ECO:0000315"/>
    <property type="project" value="UniProtKB"/>
</dbReference>
<dbReference type="FunFam" id="2.10.90.10:FF:000042">
    <property type="entry name" value="Cerberus 1 homolog (Xenopus laevis)"/>
    <property type="match status" value="1"/>
</dbReference>
<dbReference type="Gene3D" id="2.10.90.10">
    <property type="entry name" value="Cystine-knot cytokines"/>
    <property type="match status" value="1"/>
</dbReference>
<dbReference type="InterPro" id="IPR016860">
    <property type="entry name" value="Cerberus"/>
</dbReference>
<dbReference type="InterPro" id="IPR006207">
    <property type="entry name" value="Cys_knot_C"/>
</dbReference>
<dbReference type="InterPro" id="IPR029034">
    <property type="entry name" value="Cystine-knot_cytokine"/>
</dbReference>
<dbReference type="InterPro" id="IPR004133">
    <property type="entry name" value="DAN"/>
</dbReference>
<dbReference type="PANTHER" id="PTHR15273:SF4">
    <property type="entry name" value="CERBERUS"/>
    <property type="match status" value="1"/>
</dbReference>
<dbReference type="PANTHER" id="PTHR15273">
    <property type="entry name" value="DAN DOMAIN FAMILY MEMBER 5"/>
    <property type="match status" value="1"/>
</dbReference>
<dbReference type="Pfam" id="PF03045">
    <property type="entry name" value="DAN"/>
    <property type="match status" value="1"/>
</dbReference>
<dbReference type="PIRSF" id="PIRSF027807">
    <property type="entry name" value="Cerberus"/>
    <property type="match status" value="1"/>
</dbReference>
<dbReference type="SMART" id="SM00041">
    <property type="entry name" value="CT"/>
    <property type="match status" value="1"/>
</dbReference>
<dbReference type="PROSITE" id="PS01225">
    <property type="entry name" value="CTCK_2"/>
    <property type="match status" value="1"/>
</dbReference>
<proteinExistence type="evidence at protein level"/>
<name>CER1_MOUSE</name>
<reference key="1">
    <citation type="journal article" date="1997" name="Mech. Dev.">
        <title>Cerberus-like is a secreted factor with neutralizing activity expressed in the anterior primitive endoderm of the mouse gastrula.</title>
        <authorList>
            <person name="Belo J.A."/>
            <person name="Bouwmeester T."/>
            <person name="Leyns L."/>
            <person name="Kertesz N."/>
            <person name="Gallo M."/>
            <person name="Follettie M."/>
            <person name="De Robertis E.M."/>
        </authorList>
    </citation>
    <scope>NUCLEOTIDE SEQUENCE [GENOMIC DNA]</scope>
    <scope>FUNCTION</scope>
    <scope>SUBCELLULAR LOCATION</scope>
    <scope>DEVELOPMENTAL STAGE</scope>
    <source>
        <strain>129/SvJ</strain>
    </source>
</reference>
<reference key="2">
    <citation type="journal article" date="1998" name="Dev. Biol.">
        <title>Murine cerberus homologue mCer-1: a candidate anterior patterning molecule.</title>
        <authorList>
            <person name="Biben C."/>
            <person name="Stanley E."/>
            <person name="Fabri L."/>
            <person name="Kotecha S."/>
            <person name="Rhinn M."/>
            <person name="Drinkwater C."/>
            <person name="Lah M."/>
            <person name="Wang C.-C."/>
            <person name="Nash A."/>
            <person name="Hilton D."/>
            <person name="Ang S.-L."/>
            <person name="Mohun T."/>
            <person name="Harvey R.P."/>
        </authorList>
    </citation>
    <scope>NUCLEOTIDE SEQUENCE [MRNA]</scope>
    <scope>FUNCTION</scope>
    <scope>DEVELOPMENTAL STAGE</scope>
    <scope>GLYCOSYLATION</scope>
</reference>
<reference key="3">
    <citation type="journal article" date="1998" name="Proc. Natl. Acad. Sci. U.S.A.">
        <title>Expression of the mouse cerberus-related gene, Cerr1, suggests a role in anterior neural induction and somitogenesis.</title>
        <authorList>
            <person name="Shawlot W."/>
            <person name="Deng J.M."/>
            <person name="Behringer R.R."/>
        </authorList>
    </citation>
    <scope>NUCLEOTIDE SEQUENCE [MRNA]</scope>
    <scope>FUNCTION</scope>
    <scope>DEVELOPMENTAL STAGE</scope>
</reference>
<reference key="4">
    <citation type="journal article" date="2002" name="Dev. Cell">
        <title>Nodal antagonists in the anterior visceral endoderm prevent the formation of multiple primitive streaks.</title>
        <authorList>
            <person name="Perea-Gomez A."/>
            <person name="Vella F.D."/>
            <person name="Shawlot W."/>
            <person name="Oulad-Abdelghani M."/>
            <person name="Chazaud C."/>
            <person name="Meno C."/>
            <person name="Pfister V."/>
            <person name="Chen L."/>
            <person name="Robertson E."/>
            <person name="Hamada H."/>
            <person name="Behringer R.R."/>
            <person name="Ang S.L."/>
        </authorList>
    </citation>
    <scope>FUNCTION</scope>
</reference>
<accession>O55233</accession>
<accession>O35213</accession>
<comment type="function">
    <text evidence="4 5 6 7">Cytokine that may play a role in anterior neural induction and somite formation during embryogenesis in part, through a BMP-inhibitory mechanism. Can regulate Nodal signaling during gastrulation as well as the formation and patterning of the primitive streak.</text>
</comment>
<comment type="subunit">
    <text>Forms monomers and predominantly dimers.</text>
</comment>
<comment type="subcellular location">
    <subcellularLocation>
        <location evidence="5">Secreted</location>
    </subcellularLocation>
</comment>
<comment type="developmental stage">
    <text evidence="5 6 7">At 6.5 dpc, early and mid-streak stage embryos, was expressed in the anterior visceral endoderm. The expression domain extended from the extraembryonic-embryonic junction to approximately two thirds of the way down the epiblast. By the mid-streak to late streak stage, expressed in the anterior visceral endoderm but was also expressed in the definitive endoderm emanating from the anterior portion of the primitive streak. By the neural plate stage at 7.5 dpc expression was present throughout the anterior definitive endoderm layer including both the midline and anterior lateral endoderm. At the early headfold stage expression was reduced in the anterior lateral region and expression was seen primarily in the foregut endoderm. In early 8.5 dpc embryos, expression was restricted to the two most recently formed somites. In 9 dpc and 9.5 dpc embryos, expression continued in the two newest formed somites and also in the anterior presomitic mesoderm.</text>
</comment>
<comment type="PTM">
    <text evidence="6">N-glycosylated.</text>
</comment>
<comment type="similarity">
    <text evidence="8">Belongs to the DAN family.</text>
</comment>
<feature type="signal peptide" evidence="1">
    <location>
        <begin position="1"/>
        <end position="17"/>
    </location>
</feature>
<feature type="chain" id="PRO_0000006712" description="Cerberus">
    <location>
        <begin position="18"/>
        <end position="272"/>
    </location>
</feature>
<feature type="domain" description="CTCK" evidence="3">
    <location>
        <begin position="162"/>
        <end position="246"/>
    </location>
</feature>
<feature type="glycosylation site" description="N-linked (GlcNAc...) asparagine" evidence="2">
    <location>
        <position position="168"/>
    </location>
</feature>
<feature type="glycosylation site" description="N-linked (GlcNAc...) asparagine" evidence="2">
    <location>
        <position position="222"/>
    </location>
</feature>
<feature type="disulfide bond" evidence="3">
    <location>
        <begin position="162"/>
        <end position="209"/>
    </location>
</feature>
<feature type="disulfide bond" evidence="3">
    <location>
        <begin position="176"/>
        <end position="223"/>
    </location>
</feature>
<feature type="disulfide bond" evidence="3">
    <location>
        <begin position="186"/>
        <end position="239"/>
    </location>
</feature>
<feature type="disulfide bond" evidence="3">
    <location>
        <begin position="190"/>
        <end position="241"/>
    </location>
</feature>
<feature type="sequence conflict" description="In Ref. 1; AAB71838." evidence="8" ref="1">
    <original>M</original>
    <variation>R</variation>
    <location>
        <position position="220"/>
    </location>
</feature>
<organism>
    <name type="scientific">Mus musculus</name>
    <name type="common">Mouse</name>
    <dbReference type="NCBI Taxonomy" id="10090"/>
    <lineage>
        <taxon>Eukaryota</taxon>
        <taxon>Metazoa</taxon>
        <taxon>Chordata</taxon>
        <taxon>Craniata</taxon>
        <taxon>Vertebrata</taxon>
        <taxon>Euteleostomi</taxon>
        <taxon>Mammalia</taxon>
        <taxon>Eutheria</taxon>
        <taxon>Euarchontoglires</taxon>
        <taxon>Glires</taxon>
        <taxon>Rodentia</taxon>
        <taxon>Myomorpha</taxon>
        <taxon>Muroidea</taxon>
        <taxon>Muridae</taxon>
        <taxon>Murinae</taxon>
        <taxon>Mus</taxon>
        <taxon>Mus</taxon>
    </lineage>
</organism>
<evidence type="ECO:0000250" key="1"/>
<evidence type="ECO:0000255" key="2"/>
<evidence type="ECO:0000255" key="3">
    <source>
        <dbReference type="PROSITE-ProRule" id="PRU00039"/>
    </source>
</evidence>
<evidence type="ECO:0000269" key="4">
    <source>
    </source>
</evidence>
<evidence type="ECO:0000269" key="5">
    <source>
    </source>
</evidence>
<evidence type="ECO:0000269" key="6">
    <source>
    </source>
</evidence>
<evidence type="ECO:0000269" key="7">
    <source>
    </source>
</evidence>
<evidence type="ECO:0000305" key="8"/>
<keyword id="KW-0202">Cytokine</keyword>
<keyword id="KW-1015">Disulfide bond</keyword>
<keyword id="KW-0325">Glycoprotein</keyword>
<keyword id="KW-1185">Reference proteome</keyword>
<keyword id="KW-0964">Secreted</keyword>
<keyword id="KW-0732">Signal</keyword>
<gene>
    <name type="primary">Cer1</name>
    <name type="synonym">Cerl</name>
    <name type="synonym">Cerr1</name>
</gene>